<name>ILVD_PASMU</name>
<organism>
    <name type="scientific">Pasteurella multocida (strain Pm70)</name>
    <dbReference type="NCBI Taxonomy" id="272843"/>
    <lineage>
        <taxon>Bacteria</taxon>
        <taxon>Pseudomonadati</taxon>
        <taxon>Pseudomonadota</taxon>
        <taxon>Gammaproteobacteria</taxon>
        <taxon>Pasteurellales</taxon>
        <taxon>Pasteurellaceae</taxon>
        <taxon>Pasteurella</taxon>
    </lineage>
</organism>
<accession>P57957</accession>
<dbReference type="EC" id="4.2.1.9" evidence="1"/>
<dbReference type="EMBL" id="AE004439">
    <property type="protein sequence ID" value="AAK03709.1"/>
    <property type="molecule type" value="Genomic_DNA"/>
</dbReference>
<dbReference type="RefSeq" id="WP_005757827.1">
    <property type="nucleotide sequence ID" value="NC_002663.1"/>
</dbReference>
<dbReference type="SMR" id="P57957"/>
<dbReference type="STRING" id="272843.PM1625"/>
<dbReference type="EnsemblBacteria" id="AAK03709">
    <property type="protein sequence ID" value="AAK03709"/>
    <property type="gene ID" value="PM1625"/>
</dbReference>
<dbReference type="GeneID" id="77206811"/>
<dbReference type="KEGG" id="pmu:PM1625"/>
<dbReference type="PATRIC" id="fig|272843.6.peg.1645"/>
<dbReference type="HOGENOM" id="CLU_014271_4_2_6"/>
<dbReference type="OrthoDB" id="9807077at2"/>
<dbReference type="UniPathway" id="UPA00047">
    <property type="reaction ID" value="UER00057"/>
</dbReference>
<dbReference type="UniPathway" id="UPA00049">
    <property type="reaction ID" value="UER00061"/>
</dbReference>
<dbReference type="Proteomes" id="UP000000809">
    <property type="component" value="Chromosome"/>
</dbReference>
<dbReference type="GO" id="GO:0005829">
    <property type="term" value="C:cytosol"/>
    <property type="evidence" value="ECO:0007669"/>
    <property type="project" value="TreeGrafter"/>
</dbReference>
<dbReference type="GO" id="GO:0051537">
    <property type="term" value="F:2 iron, 2 sulfur cluster binding"/>
    <property type="evidence" value="ECO:0007669"/>
    <property type="project" value="UniProtKB-UniRule"/>
</dbReference>
<dbReference type="GO" id="GO:0004160">
    <property type="term" value="F:dihydroxy-acid dehydratase activity"/>
    <property type="evidence" value="ECO:0007669"/>
    <property type="project" value="UniProtKB-UniRule"/>
</dbReference>
<dbReference type="GO" id="GO:0000287">
    <property type="term" value="F:magnesium ion binding"/>
    <property type="evidence" value="ECO:0007669"/>
    <property type="project" value="UniProtKB-UniRule"/>
</dbReference>
<dbReference type="GO" id="GO:0009097">
    <property type="term" value="P:isoleucine biosynthetic process"/>
    <property type="evidence" value="ECO:0007669"/>
    <property type="project" value="UniProtKB-UniRule"/>
</dbReference>
<dbReference type="GO" id="GO:0009099">
    <property type="term" value="P:L-valine biosynthetic process"/>
    <property type="evidence" value="ECO:0007669"/>
    <property type="project" value="UniProtKB-UniRule"/>
</dbReference>
<dbReference type="FunFam" id="3.50.30.80:FF:000001">
    <property type="entry name" value="Dihydroxy-acid dehydratase"/>
    <property type="match status" value="1"/>
</dbReference>
<dbReference type="Gene3D" id="3.50.30.80">
    <property type="entry name" value="IlvD/EDD C-terminal domain-like"/>
    <property type="match status" value="1"/>
</dbReference>
<dbReference type="HAMAP" id="MF_00012">
    <property type="entry name" value="IlvD"/>
    <property type="match status" value="1"/>
</dbReference>
<dbReference type="InterPro" id="IPR042096">
    <property type="entry name" value="Dihydro-acid_dehy_C"/>
</dbReference>
<dbReference type="InterPro" id="IPR004404">
    <property type="entry name" value="DihydroxyA_deHydtase"/>
</dbReference>
<dbReference type="InterPro" id="IPR020558">
    <property type="entry name" value="DiOHA_6PGluconate_deHydtase_CS"/>
</dbReference>
<dbReference type="InterPro" id="IPR056740">
    <property type="entry name" value="ILV_EDD_C"/>
</dbReference>
<dbReference type="InterPro" id="IPR000581">
    <property type="entry name" value="ILV_EDD_N"/>
</dbReference>
<dbReference type="InterPro" id="IPR037237">
    <property type="entry name" value="IlvD/EDD_N"/>
</dbReference>
<dbReference type="NCBIfam" id="TIGR00110">
    <property type="entry name" value="ilvD"/>
    <property type="match status" value="1"/>
</dbReference>
<dbReference type="NCBIfam" id="NF009103">
    <property type="entry name" value="PRK12448.1"/>
    <property type="match status" value="1"/>
</dbReference>
<dbReference type="PANTHER" id="PTHR43661">
    <property type="entry name" value="D-XYLONATE DEHYDRATASE"/>
    <property type="match status" value="1"/>
</dbReference>
<dbReference type="PANTHER" id="PTHR43661:SF3">
    <property type="entry name" value="D-XYLONATE DEHYDRATASE YAGF-RELATED"/>
    <property type="match status" value="1"/>
</dbReference>
<dbReference type="Pfam" id="PF24877">
    <property type="entry name" value="ILV_EDD_C"/>
    <property type="match status" value="1"/>
</dbReference>
<dbReference type="Pfam" id="PF00920">
    <property type="entry name" value="ILVD_EDD_N"/>
    <property type="match status" value="1"/>
</dbReference>
<dbReference type="SUPFAM" id="SSF143975">
    <property type="entry name" value="IlvD/EDD N-terminal domain-like"/>
    <property type="match status" value="1"/>
</dbReference>
<dbReference type="SUPFAM" id="SSF52016">
    <property type="entry name" value="LeuD/IlvD-like"/>
    <property type="match status" value="1"/>
</dbReference>
<dbReference type="PROSITE" id="PS00886">
    <property type="entry name" value="ILVD_EDD_1"/>
    <property type="match status" value="1"/>
</dbReference>
<dbReference type="PROSITE" id="PS00887">
    <property type="entry name" value="ILVD_EDD_2"/>
    <property type="match status" value="1"/>
</dbReference>
<evidence type="ECO:0000255" key="1">
    <source>
        <dbReference type="HAMAP-Rule" id="MF_00012"/>
    </source>
</evidence>
<proteinExistence type="inferred from homology"/>
<reference key="1">
    <citation type="journal article" date="2001" name="Proc. Natl. Acad. Sci. U.S.A.">
        <title>Complete genomic sequence of Pasteurella multocida Pm70.</title>
        <authorList>
            <person name="May B.J."/>
            <person name="Zhang Q."/>
            <person name="Li L.L."/>
            <person name="Paustian M.L."/>
            <person name="Whittam T.S."/>
            <person name="Kapur V."/>
        </authorList>
    </citation>
    <scope>NUCLEOTIDE SEQUENCE [LARGE SCALE GENOMIC DNA]</scope>
    <source>
        <strain>Pm70</strain>
    </source>
</reference>
<comment type="function">
    <text evidence="1">Functions in the biosynthesis of branched-chain amino acids. Catalyzes the dehydration of (2R,3R)-2,3-dihydroxy-3-methylpentanoate (2,3-dihydroxy-3-methylvalerate) into 2-oxo-3-methylpentanoate (2-oxo-3-methylvalerate) and of (2R)-2,3-dihydroxy-3-methylbutanoate (2,3-dihydroxyisovalerate) into 2-oxo-3-methylbutanoate (2-oxoisovalerate), the penultimate precursor to L-isoleucine and L-valine, respectively.</text>
</comment>
<comment type="catalytic activity">
    <reaction evidence="1">
        <text>(2R)-2,3-dihydroxy-3-methylbutanoate = 3-methyl-2-oxobutanoate + H2O</text>
        <dbReference type="Rhea" id="RHEA:24809"/>
        <dbReference type="ChEBI" id="CHEBI:11851"/>
        <dbReference type="ChEBI" id="CHEBI:15377"/>
        <dbReference type="ChEBI" id="CHEBI:49072"/>
        <dbReference type="EC" id="4.2.1.9"/>
    </reaction>
    <physiologicalReaction direction="left-to-right" evidence="1">
        <dbReference type="Rhea" id="RHEA:24810"/>
    </physiologicalReaction>
</comment>
<comment type="catalytic activity">
    <reaction evidence="1">
        <text>(2R,3R)-2,3-dihydroxy-3-methylpentanoate = (S)-3-methyl-2-oxopentanoate + H2O</text>
        <dbReference type="Rhea" id="RHEA:27694"/>
        <dbReference type="ChEBI" id="CHEBI:15377"/>
        <dbReference type="ChEBI" id="CHEBI:35146"/>
        <dbReference type="ChEBI" id="CHEBI:49258"/>
        <dbReference type="EC" id="4.2.1.9"/>
    </reaction>
    <physiologicalReaction direction="left-to-right" evidence="1">
        <dbReference type="Rhea" id="RHEA:27695"/>
    </physiologicalReaction>
</comment>
<comment type="cofactor">
    <cofactor evidence="1">
        <name>[2Fe-2S] cluster</name>
        <dbReference type="ChEBI" id="CHEBI:190135"/>
    </cofactor>
    <text evidence="1">Binds 1 [2Fe-2S] cluster per subunit. This cluster acts as a Lewis acid cofactor.</text>
</comment>
<comment type="cofactor">
    <cofactor evidence="1">
        <name>Mg(2+)</name>
        <dbReference type="ChEBI" id="CHEBI:18420"/>
    </cofactor>
</comment>
<comment type="pathway">
    <text evidence="1">Amino-acid biosynthesis; L-isoleucine biosynthesis; L-isoleucine from 2-oxobutanoate: step 3/4.</text>
</comment>
<comment type="pathway">
    <text evidence="1">Amino-acid biosynthesis; L-valine biosynthesis; L-valine from pyruvate: step 3/4.</text>
</comment>
<comment type="subunit">
    <text evidence="1">Homodimer.</text>
</comment>
<comment type="similarity">
    <text evidence="1">Belongs to the IlvD/Edd family.</text>
</comment>
<gene>
    <name evidence="1" type="primary">ilvD</name>
    <name type="ordered locus">PM1625</name>
</gene>
<keyword id="KW-0001">2Fe-2S</keyword>
<keyword id="KW-0028">Amino-acid biosynthesis</keyword>
<keyword id="KW-0100">Branched-chain amino acid biosynthesis</keyword>
<keyword id="KW-0408">Iron</keyword>
<keyword id="KW-0411">Iron-sulfur</keyword>
<keyword id="KW-0456">Lyase</keyword>
<keyword id="KW-0460">Magnesium</keyword>
<keyword id="KW-0479">Metal-binding</keyword>
<keyword id="KW-1185">Reference proteome</keyword>
<feature type="chain" id="PRO_0000103487" description="Dihydroxy-acid dehydratase">
    <location>
        <begin position="1"/>
        <end position="611"/>
    </location>
</feature>
<feature type="active site" description="Proton acceptor" evidence="1">
    <location>
        <position position="517"/>
    </location>
</feature>
<feature type="binding site" evidence="1">
    <location>
        <position position="81"/>
    </location>
    <ligand>
        <name>Mg(2+)</name>
        <dbReference type="ChEBI" id="CHEBI:18420"/>
    </ligand>
</feature>
<feature type="binding site" evidence="1">
    <location>
        <position position="122"/>
    </location>
    <ligand>
        <name>[2Fe-2S] cluster</name>
        <dbReference type="ChEBI" id="CHEBI:190135"/>
    </ligand>
</feature>
<feature type="binding site" evidence="1">
    <location>
        <position position="123"/>
    </location>
    <ligand>
        <name>Mg(2+)</name>
        <dbReference type="ChEBI" id="CHEBI:18420"/>
    </ligand>
</feature>
<feature type="binding site" description="via carbamate group" evidence="1">
    <location>
        <position position="124"/>
    </location>
    <ligand>
        <name>Mg(2+)</name>
        <dbReference type="ChEBI" id="CHEBI:18420"/>
    </ligand>
</feature>
<feature type="binding site" evidence="1">
    <location>
        <position position="195"/>
    </location>
    <ligand>
        <name>[2Fe-2S] cluster</name>
        <dbReference type="ChEBI" id="CHEBI:190135"/>
    </ligand>
</feature>
<feature type="binding site" evidence="1">
    <location>
        <position position="491"/>
    </location>
    <ligand>
        <name>Mg(2+)</name>
        <dbReference type="ChEBI" id="CHEBI:18420"/>
    </ligand>
</feature>
<feature type="modified residue" description="N6-carboxylysine" evidence="1">
    <location>
        <position position="124"/>
    </location>
</feature>
<protein>
    <recommendedName>
        <fullName evidence="1">Dihydroxy-acid dehydratase</fullName>
        <shortName evidence="1">DAD</shortName>
        <ecNumber evidence="1">4.2.1.9</ecNumber>
    </recommendedName>
</protein>
<sequence>MPKLRSATSTQGRNMAGARALWRATGMKENDFGKPIIAVVNSFTQFVPGHVHLKDMGQLVAREIEKAGGVAKEFNTIAVDDGIAMGHGGMLYSLPSRDLIADSVEYMVNAHCADAMVCISNCDKITPGMLMAALRLNIPCVFVSGGPMEAGKTKLSDKIIKLDLVDAMIQGANPNVSDEDSAQIERSACPTCGSCSGMFTANSMNCLTEALGLSLPGNGSCLATHADRKQLFLDAGKQVVELCKRYYEQEDDSVLPRSIANKKAFENAMSLDIAMGGSTNTVLHLLAAAQEAEVDFTMADIDRLSRQVPCLSKVAPNTQKYHMEDVHRAGGIMAILGELDRANLLHNDTRTVLGMSLAEQIAKYDIVLTKDEAVHKFFRAGPAGIRTTEAFSQDCRWDTVDDDRENGCIRSKTFAYSQDGGLAMLSGNLAMDGCIVKTAGVDESILKFTGDAIVFESQEDAVAGILGGKVQAGHVVVIRYEGPKGGPGMQEMLYPTSYLKSMGLGKACALLTDGRFSGGTSGLSIGHCSPEAAAGGLIGLVKDGDKIEIDIPNRSIQLCVAEEELAQRRAEQDKLGWQPVNRQREVSFALKVYGHFATSADKGAVRDKTKI</sequence>